<reference key="1">
    <citation type="submission" date="2007-09" db="EMBL/GenBank/DDBJ databases">
        <title>Complete genome sequence of Rickettsia akari.</title>
        <authorList>
            <person name="Madan A."/>
            <person name="Fahey J."/>
            <person name="Helton E."/>
            <person name="Ketteman M."/>
            <person name="Madan A."/>
            <person name="Rodrigues S."/>
            <person name="Sanchez A."/>
            <person name="Whiting M."/>
            <person name="Dasch G."/>
            <person name="Eremeeva M."/>
        </authorList>
    </citation>
    <scope>NUCLEOTIDE SEQUENCE [LARGE SCALE GENOMIC DNA]</scope>
    <source>
        <strain>Hartford</strain>
    </source>
</reference>
<protein>
    <recommendedName>
        <fullName evidence="1">Elongation factor 4</fullName>
        <shortName evidence="1">EF-4</shortName>
        <ecNumber evidence="1">3.6.5.n1</ecNumber>
    </recommendedName>
    <alternativeName>
        <fullName evidence="1">Ribosomal back-translocase LepA</fullName>
    </alternativeName>
</protein>
<evidence type="ECO:0000255" key="1">
    <source>
        <dbReference type="HAMAP-Rule" id="MF_00071"/>
    </source>
</evidence>
<keyword id="KW-0997">Cell inner membrane</keyword>
<keyword id="KW-1003">Cell membrane</keyword>
<keyword id="KW-0342">GTP-binding</keyword>
<keyword id="KW-0378">Hydrolase</keyword>
<keyword id="KW-0472">Membrane</keyword>
<keyword id="KW-0547">Nucleotide-binding</keyword>
<keyword id="KW-0648">Protein biosynthesis</keyword>
<name>LEPA_RICAH</name>
<accession>A8GMT1</accession>
<dbReference type="EC" id="3.6.5.n1" evidence="1"/>
<dbReference type="EMBL" id="CP000847">
    <property type="protein sequence ID" value="ABV74706.1"/>
    <property type="molecule type" value="Genomic_DNA"/>
</dbReference>
<dbReference type="RefSeq" id="WP_012149340.1">
    <property type="nucleotide sequence ID" value="NC_009881.1"/>
</dbReference>
<dbReference type="SMR" id="A8GMT1"/>
<dbReference type="STRING" id="293614.A1C_01975"/>
<dbReference type="KEGG" id="rak:A1C_01975"/>
<dbReference type="eggNOG" id="COG0481">
    <property type="taxonomic scope" value="Bacteria"/>
</dbReference>
<dbReference type="HOGENOM" id="CLU_009995_3_3_5"/>
<dbReference type="Proteomes" id="UP000006830">
    <property type="component" value="Chromosome"/>
</dbReference>
<dbReference type="GO" id="GO:0005886">
    <property type="term" value="C:plasma membrane"/>
    <property type="evidence" value="ECO:0007669"/>
    <property type="project" value="UniProtKB-SubCell"/>
</dbReference>
<dbReference type="GO" id="GO:0005525">
    <property type="term" value="F:GTP binding"/>
    <property type="evidence" value="ECO:0007669"/>
    <property type="project" value="UniProtKB-UniRule"/>
</dbReference>
<dbReference type="GO" id="GO:0003924">
    <property type="term" value="F:GTPase activity"/>
    <property type="evidence" value="ECO:0007669"/>
    <property type="project" value="UniProtKB-UniRule"/>
</dbReference>
<dbReference type="GO" id="GO:0097216">
    <property type="term" value="F:guanosine tetraphosphate binding"/>
    <property type="evidence" value="ECO:0007669"/>
    <property type="project" value="UniProtKB-ARBA"/>
</dbReference>
<dbReference type="GO" id="GO:0043022">
    <property type="term" value="F:ribosome binding"/>
    <property type="evidence" value="ECO:0007669"/>
    <property type="project" value="UniProtKB-UniRule"/>
</dbReference>
<dbReference type="GO" id="GO:0003746">
    <property type="term" value="F:translation elongation factor activity"/>
    <property type="evidence" value="ECO:0007669"/>
    <property type="project" value="UniProtKB-UniRule"/>
</dbReference>
<dbReference type="GO" id="GO:0045727">
    <property type="term" value="P:positive regulation of translation"/>
    <property type="evidence" value="ECO:0007669"/>
    <property type="project" value="UniProtKB-UniRule"/>
</dbReference>
<dbReference type="CDD" id="cd03699">
    <property type="entry name" value="EF4_II"/>
    <property type="match status" value="1"/>
</dbReference>
<dbReference type="CDD" id="cd16260">
    <property type="entry name" value="EF4_III"/>
    <property type="match status" value="1"/>
</dbReference>
<dbReference type="CDD" id="cd01890">
    <property type="entry name" value="LepA"/>
    <property type="match status" value="1"/>
</dbReference>
<dbReference type="CDD" id="cd03709">
    <property type="entry name" value="lepA_C"/>
    <property type="match status" value="1"/>
</dbReference>
<dbReference type="FunFam" id="3.40.50.300:FF:000078">
    <property type="entry name" value="Elongation factor 4"/>
    <property type="match status" value="1"/>
</dbReference>
<dbReference type="FunFam" id="2.40.30.10:FF:000015">
    <property type="entry name" value="Translation factor GUF1, mitochondrial"/>
    <property type="match status" value="1"/>
</dbReference>
<dbReference type="FunFam" id="3.30.70.240:FF:000007">
    <property type="entry name" value="Translation factor GUF1, mitochondrial"/>
    <property type="match status" value="1"/>
</dbReference>
<dbReference type="FunFam" id="3.30.70.2570:FF:000001">
    <property type="entry name" value="Translation factor GUF1, mitochondrial"/>
    <property type="match status" value="1"/>
</dbReference>
<dbReference type="FunFam" id="3.30.70.870:FF:000004">
    <property type="entry name" value="Translation factor GUF1, mitochondrial"/>
    <property type="match status" value="1"/>
</dbReference>
<dbReference type="Gene3D" id="3.30.70.240">
    <property type="match status" value="1"/>
</dbReference>
<dbReference type="Gene3D" id="3.30.70.2570">
    <property type="entry name" value="Elongation factor 4, C-terminal domain"/>
    <property type="match status" value="1"/>
</dbReference>
<dbReference type="Gene3D" id="3.30.70.870">
    <property type="entry name" value="Elongation Factor G (Translational Gtpase), domain 3"/>
    <property type="match status" value="1"/>
</dbReference>
<dbReference type="Gene3D" id="3.40.50.300">
    <property type="entry name" value="P-loop containing nucleotide triphosphate hydrolases"/>
    <property type="match status" value="1"/>
</dbReference>
<dbReference type="Gene3D" id="2.40.30.10">
    <property type="entry name" value="Translation factors"/>
    <property type="match status" value="1"/>
</dbReference>
<dbReference type="HAMAP" id="MF_00071">
    <property type="entry name" value="LepA"/>
    <property type="match status" value="1"/>
</dbReference>
<dbReference type="InterPro" id="IPR006297">
    <property type="entry name" value="EF-4"/>
</dbReference>
<dbReference type="InterPro" id="IPR035647">
    <property type="entry name" value="EFG_III/V"/>
</dbReference>
<dbReference type="InterPro" id="IPR000640">
    <property type="entry name" value="EFG_V-like"/>
</dbReference>
<dbReference type="InterPro" id="IPR004161">
    <property type="entry name" value="EFTu-like_2"/>
</dbReference>
<dbReference type="InterPro" id="IPR031157">
    <property type="entry name" value="G_TR_CS"/>
</dbReference>
<dbReference type="InterPro" id="IPR038363">
    <property type="entry name" value="LepA_C_sf"/>
</dbReference>
<dbReference type="InterPro" id="IPR013842">
    <property type="entry name" value="LepA_CTD"/>
</dbReference>
<dbReference type="InterPro" id="IPR035654">
    <property type="entry name" value="LepA_IV"/>
</dbReference>
<dbReference type="InterPro" id="IPR027417">
    <property type="entry name" value="P-loop_NTPase"/>
</dbReference>
<dbReference type="InterPro" id="IPR005225">
    <property type="entry name" value="Small_GTP-bd"/>
</dbReference>
<dbReference type="InterPro" id="IPR000795">
    <property type="entry name" value="T_Tr_GTP-bd_dom"/>
</dbReference>
<dbReference type="NCBIfam" id="TIGR01393">
    <property type="entry name" value="lepA"/>
    <property type="match status" value="1"/>
</dbReference>
<dbReference type="NCBIfam" id="TIGR00231">
    <property type="entry name" value="small_GTP"/>
    <property type="match status" value="1"/>
</dbReference>
<dbReference type="PANTHER" id="PTHR43512:SF4">
    <property type="entry name" value="TRANSLATION FACTOR GUF1 HOMOLOG, CHLOROPLASTIC"/>
    <property type="match status" value="1"/>
</dbReference>
<dbReference type="PANTHER" id="PTHR43512">
    <property type="entry name" value="TRANSLATION FACTOR GUF1-RELATED"/>
    <property type="match status" value="1"/>
</dbReference>
<dbReference type="Pfam" id="PF00679">
    <property type="entry name" value="EFG_C"/>
    <property type="match status" value="1"/>
</dbReference>
<dbReference type="Pfam" id="PF00009">
    <property type="entry name" value="GTP_EFTU"/>
    <property type="match status" value="1"/>
</dbReference>
<dbReference type="Pfam" id="PF03144">
    <property type="entry name" value="GTP_EFTU_D2"/>
    <property type="match status" value="1"/>
</dbReference>
<dbReference type="Pfam" id="PF06421">
    <property type="entry name" value="LepA_C"/>
    <property type="match status" value="1"/>
</dbReference>
<dbReference type="PRINTS" id="PR00315">
    <property type="entry name" value="ELONGATNFCT"/>
</dbReference>
<dbReference type="SMART" id="SM00838">
    <property type="entry name" value="EFG_C"/>
    <property type="match status" value="1"/>
</dbReference>
<dbReference type="SUPFAM" id="SSF54980">
    <property type="entry name" value="EF-G C-terminal domain-like"/>
    <property type="match status" value="2"/>
</dbReference>
<dbReference type="SUPFAM" id="SSF52540">
    <property type="entry name" value="P-loop containing nucleoside triphosphate hydrolases"/>
    <property type="match status" value="1"/>
</dbReference>
<dbReference type="PROSITE" id="PS00301">
    <property type="entry name" value="G_TR_1"/>
    <property type="match status" value="1"/>
</dbReference>
<dbReference type="PROSITE" id="PS51722">
    <property type="entry name" value="G_TR_2"/>
    <property type="match status" value="1"/>
</dbReference>
<comment type="function">
    <text evidence="1">Required for accurate and efficient protein synthesis under certain stress conditions. May act as a fidelity factor of the translation reaction, by catalyzing a one-codon backward translocation of tRNAs on improperly translocated ribosomes. Back-translocation proceeds from a post-translocation (POST) complex to a pre-translocation (PRE) complex, thus giving elongation factor G a second chance to translocate the tRNAs correctly. Binds to ribosomes in a GTP-dependent manner.</text>
</comment>
<comment type="catalytic activity">
    <reaction evidence="1">
        <text>GTP + H2O = GDP + phosphate + H(+)</text>
        <dbReference type="Rhea" id="RHEA:19669"/>
        <dbReference type="ChEBI" id="CHEBI:15377"/>
        <dbReference type="ChEBI" id="CHEBI:15378"/>
        <dbReference type="ChEBI" id="CHEBI:37565"/>
        <dbReference type="ChEBI" id="CHEBI:43474"/>
        <dbReference type="ChEBI" id="CHEBI:58189"/>
        <dbReference type="EC" id="3.6.5.n1"/>
    </reaction>
</comment>
<comment type="subcellular location">
    <subcellularLocation>
        <location evidence="1">Cell inner membrane</location>
        <topology evidence="1">Peripheral membrane protein</topology>
        <orientation evidence="1">Cytoplasmic side</orientation>
    </subcellularLocation>
</comment>
<comment type="similarity">
    <text evidence="1">Belongs to the TRAFAC class translation factor GTPase superfamily. Classic translation factor GTPase family. LepA subfamily.</text>
</comment>
<gene>
    <name evidence="1" type="primary">lepA</name>
    <name type="ordered locus">A1C_01975</name>
</gene>
<organism>
    <name type="scientific">Rickettsia akari (strain Hartford)</name>
    <dbReference type="NCBI Taxonomy" id="293614"/>
    <lineage>
        <taxon>Bacteria</taxon>
        <taxon>Pseudomonadati</taxon>
        <taxon>Pseudomonadota</taxon>
        <taxon>Alphaproteobacteria</taxon>
        <taxon>Rickettsiales</taxon>
        <taxon>Rickettsiaceae</taxon>
        <taxon>Rickettsieae</taxon>
        <taxon>Rickettsia</taxon>
        <taxon>spotted fever group</taxon>
    </lineage>
</organism>
<proteinExistence type="inferred from homology"/>
<sequence length="600" mass="67230">MKNQKYIRNFSIIAHIDHGKSTLADRLIEHCGGLQAREMRTQVLDSMDIEKERGITIKAQTVRLVYKAKDGNTYYLNLMDTPGHVDFAYEVSRSLAACEGSLLVVDSTQGVEAQTLANVYQAIEHDHEIVPVLNKIDLPASEPEQVKQQIEDIIGIDASEAVLISAKSGIGIDLVLEAIVNKLHPPKESSTDILKALLVDSWYDPYLGVVILVRIIDGTLRKNMRIKMMATNSVYTVENVGFFTPKKHISDVLYAGEIGFVTASIKQVADCKVGDTITDEKKPCEQALPGFKPNLPVVFCGLYPTDSSEFEHLKDSLAKLRLNDASFEYEMESSSALGVGFRCGFLGLLHLEIIQERLSREFDLDLITTAPSVVYKIHMRYGESLEIHNPADLPDLQKIESMEEPWIKATIMVPDEFLGAVLSLCTEKRGVQLDHSYIANRAKIVYKLPLNEIVYDFYDRLKSCSKGYASFEWQIDVYEPSELVKLGILVNGEVIDALSTIVHRSRAEQRGKVLCVRLKDLIPRQQIDIAIQASIGSRIIARETIKALRKDVLSKCYGGDISRKRKLLEKQKAGKKRMRQYGNIEIPQSAFIAALKIGDE</sequence>
<feature type="chain" id="PRO_1000032045" description="Elongation factor 4">
    <location>
        <begin position="1"/>
        <end position="600"/>
    </location>
</feature>
<feature type="domain" description="tr-type G">
    <location>
        <begin position="5"/>
        <end position="187"/>
    </location>
</feature>
<feature type="binding site" evidence="1">
    <location>
        <begin position="17"/>
        <end position="22"/>
    </location>
    <ligand>
        <name>GTP</name>
        <dbReference type="ChEBI" id="CHEBI:37565"/>
    </ligand>
</feature>
<feature type="binding site" evidence="1">
    <location>
        <begin position="134"/>
        <end position="137"/>
    </location>
    <ligand>
        <name>GTP</name>
        <dbReference type="ChEBI" id="CHEBI:37565"/>
    </ligand>
</feature>